<feature type="initiator methionine" description="Removed" evidence="2">
    <location>
        <position position="1"/>
    </location>
</feature>
<feature type="chain" id="PRO_0000098969" description="Tryptophan synthase beta chain">
    <location>
        <begin position="2"/>
        <end position="421"/>
    </location>
</feature>
<feature type="modified residue" description="N6-(pyridoxal phosphate)lysine" evidence="1">
    <location>
        <position position="112"/>
    </location>
</feature>
<feature type="strand" evidence="5">
    <location>
        <begin position="28"/>
        <end position="32"/>
    </location>
</feature>
<feature type="strand" evidence="5">
    <location>
        <begin position="35"/>
        <end position="41"/>
    </location>
</feature>
<feature type="helix" evidence="3">
    <location>
        <begin position="43"/>
        <end position="45"/>
    </location>
</feature>
<feature type="helix" evidence="3">
    <location>
        <begin position="46"/>
        <end position="60"/>
    </location>
</feature>
<feature type="helix" evidence="3">
    <location>
        <begin position="64"/>
        <end position="72"/>
    </location>
</feature>
<feature type="turn" evidence="3">
    <location>
        <begin position="73"/>
        <end position="76"/>
    </location>
</feature>
<feature type="strand" evidence="3">
    <location>
        <begin position="83"/>
        <end position="85"/>
    </location>
</feature>
<feature type="helix" evidence="3">
    <location>
        <begin position="87"/>
        <end position="92"/>
    </location>
</feature>
<feature type="turn" evidence="3">
    <location>
        <begin position="93"/>
        <end position="95"/>
    </location>
</feature>
<feature type="strand" evidence="3">
    <location>
        <begin position="97"/>
        <end position="101"/>
    </location>
</feature>
<feature type="helix" evidence="3">
    <location>
        <begin position="103"/>
        <end position="105"/>
    </location>
</feature>
<feature type="helix" evidence="5">
    <location>
        <begin position="107"/>
        <end position="109"/>
    </location>
</feature>
<feature type="helix" evidence="3">
    <location>
        <begin position="112"/>
        <end position="125"/>
    </location>
</feature>
<feature type="strand" evidence="3">
    <location>
        <begin position="130"/>
        <end position="138"/>
    </location>
</feature>
<feature type="helix" evidence="3">
    <location>
        <begin position="139"/>
        <end position="151"/>
    </location>
</feature>
<feature type="strand" evidence="3">
    <location>
        <begin position="154"/>
        <end position="160"/>
    </location>
</feature>
<feature type="helix" evidence="3">
    <location>
        <begin position="161"/>
        <end position="166"/>
    </location>
</feature>
<feature type="helix" evidence="3">
    <location>
        <begin position="168"/>
        <end position="176"/>
    </location>
</feature>
<feature type="strand" evidence="3">
    <location>
        <begin position="180"/>
        <end position="184"/>
    </location>
</feature>
<feature type="strand" evidence="4">
    <location>
        <begin position="186"/>
        <end position="188"/>
    </location>
</feature>
<feature type="helix" evidence="3">
    <location>
        <begin position="191"/>
        <end position="205"/>
    </location>
</feature>
<feature type="turn" evidence="3">
    <location>
        <begin position="206"/>
        <end position="208"/>
    </location>
</feature>
<feature type="strand" evidence="3">
    <location>
        <begin position="209"/>
        <end position="211"/>
    </location>
</feature>
<feature type="strand" evidence="3">
    <location>
        <begin position="216"/>
        <end position="218"/>
    </location>
</feature>
<feature type="helix" evidence="3">
    <location>
        <begin position="223"/>
        <end position="229"/>
    </location>
</feature>
<feature type="helix" evidence="3">
    <location>
        <begin position="232"/>
        <end position="244"/>
    </location>
</feature>
<feature type="strand" evidence="3">
    <location>
        <begin position="245"/>
        <end position="247"/>
    </location>
</feature>
<feature type="strand" evidence="3">
    <location>
        <begin position="250"/>
        <end position="255"/>
    </location>
</feature>
<feature type="helix" evidence="3">
    <location>
        <begin position="256"/>
        <end position="258"/>
    </location>
</feature>
<feature type="helix" evidence="3">
    <location>
        <begin position="259"/>
        <end position="263"/>
    </location>
</feature>
<feature type="helix" evidence="3">
    <location>
        <begin position="267"/>
        <end position="269"/>
    </location>
</feature>
<feature type="strand" evidence="3">
    <location>
        <begin position="276"/>
        <end position="282"/>
    </location>
</feature>
<feature type="helix" evidence="5">
    <location>
        <begin position="287"/>
        <end position="289"/>
    </location>
</feature>
<feature type="helix" evidence="5">
    <location>
        <begin position="295"/>
        <end position="298"/>
    </location>
</feature>
<feature type="strand" evidence="5">
    <location>
        <begin position="300"/>
        <end position="304"/>
    </location>
</feature>
<feature type="strand" evidence="5">
    <location>
        <begin position="306"/>
        <end position="311"/>
    </location>
</feature>
<feature type="strand" evidence="5">
    <location>
        <begin position="325"/>
        <end position="327"/>
    </location>
</feature>
<feature type="helix" evidence="5">
    <location>
        <begin position="336"/>
        <end position="343"/>
    </location>
</feature>
<feature type="strand" evidence="3">
    <location>
        <begin position="348"/>
        <end position="352"/>
    </location>
</feature>
<feature type="helix" evidence="3">
    <location>
        <begin position="354"/>
        <end position="368"/>
    </location>
</feature>
<feature type="helix" evidence="3">
    <location>
        <begin position="374"/>
        <end position="390"/>
    </location>
</feature>
<feature type="strand" evidence="3">
    <location>
        <begin position="395"/>
        <end position="399"/>
    </location>
</feature>
<feature type="strand" evidence="3">
    <location>
        <begin position="404"/>
        <end position="406"/>
    </location>
</feature>
<feature type="helix" evidence="3">
    <location>
        <begin position="407"/>
        <end position="414"/>
    </location>
</feature>
<feature type="turn" evidence="5">
    <location>
        <begin position="415"/>
        <end position="418"/>
    </location>
</feature>
<comment type="function">
    <text evidence="1">The beta subunit is responsible for the synthesis of L-tryptophan from indole and L-serine.</text>
</comment>
<comment type="catalytic activity">
    <reaction evidence="1">
        <text>(1S,2R)-1-C-(indol-3-yl)glycerol 3-phosphate + L-serine = D-glyceraldehyde 3-phosphate + L-tryptophan + H2O</text>
        <dbReference type="Rhea" id="RHEA:10532"/>
        <dbReference type="ChEBI" id="CHEBI:15377"/>
        <dbReference type="ChEBI" id="CHEBI:33384"/>
        <dbReference type="ChEBI" id="CHEBI:57912"/>
        <dbReference type="ChEBI" id="CHEBI:58866"/>
        <dbReference type="ChEBI" id="CHEBI:59776"/>
        <dbReference type="EC" id="4.2.1.20"/>
    </reaction>
</comment>
<comment type="cofactor">
    <cofactor evidence="1">
        <name>pyridoxal 5'-phosphate</name>
        <dbReference type="ChEBI" id="CHEBI:597326"/>
    </cofactor>
</comment>
<comment type="pathway">
    <text evidence="1">Amino-acid biosynthesis; L-tryptophan biosynthesis; L-tryptophan from chorismate: step 5/5.</text>
</comment>
<comment type="subunit">
    <text evidence="1">Tetramer of two alpha and two beta chains.</text>
</comment>
<comment type="similarity">
    <text evidence="1">Belongs to the TrpB family.</text>
</comment>
<comment type="sequence caution" evidence="2">
    <conflict type="erroneous initiation">
        <sequence resource="EMBL-CDS" id="CCP44376"/>
    </conflict>
    <text>Extended N-terminus.</text>
</comment>
<sequence length="421" mass="44514">MTDLSTPDLPRMSAAIAEPTSHDPDSGGHFGGPSGWGGRYVPEALMAVIEEVTAAYQKERVSQDFLDDLDRLQANYAGRPSPLYEATRLSQHAGSARIFLKREDLNHTGSHKINNVLGQALLARRMGKTRVIAETGAGQHGVATATACALLGLDCVIYMGGIDTARQALNVARMRLLGAEVVAVQTGSKTLKDAINEAFRDWVANADNTYYCFGTAAGPHPFPTMVRDFQRIIGMEARVQIQGQAGRLPDAVVACVGGGSNAIGIFHAFLDDPGVRLVGFEAAGDGVETGRHAATFTAGSPGAFHGSFSYLLQDEDGQTIESHSISAGLDYPGVGPEHAWLKEAGRVDYRPITDSEAMDAFGLLCRMEGIIPAIESAHAVAGALKLGVELGRGAVIVVNLSGRGDKDVETAAKWFGLLGND</sequence>
<protein>
    <recommendedName>
        <fullName evidence="1">Tryptophan synthase beta chain</fullName>
        <ecNumber evidence="1">4.2.1.20</ecNumber>
    </recommendedName>
</protein>
<keyword id="KW-0002">3D-structure</keyword>
<keyword id="KW-0028">Amino-acid biosynthesis</keyword>
<keyword id="KW-0057">Aromatic amino acid biosynthesis</keyword>
<keyword id="KW-0903">Direct protein sequencing</keyword>
<keyword id="KW-0456">Lyase</keyword>
<keyword id="KW-0663">Pyridoxal phosphate</keyword>
<keyword id="KW-1185">Reference proteome</keyword>
<keyword id="KW-0822">Tryptophan biosynthesis</keyword>
<evidence type="ECO:0000255" key="1">
    <source>
        <dbReference type="HAMAP-Rule" id="MF_00133"/>
    </source>
</evidence>
<evidence type="ECO:0000269" key="2">
    <source>
    </source>
</evidence>
<evidence type="ECO:0007829" key="3">
    <source>
        <dbReference type="PDB" id="2O2E"/>
    </source>
</evidence>
<evidence type="ECO:0007829" key="4">
    <source>
        <dbReference type="PDB" id="2O2J"/>
    </source>
</evidence>
<evidence type="ECO:0007829" key="5">
    <source>
        <dbReference type="PDB" id="5TCH"/>
    </source>
</evidence>
<reference key="1">
    <citation type="journal article" date="1998" name="Nature">
        <title>Deciphering the biology of Mycobacterium tuberculosis from the complete genome sequence.</title>
        <authorList>
            <person name="Cole S.T."/>
            <person name="Brosch R."/>
            <person name="Parkhill J."/>
            <person name="Garnier T."/>
            <person name="Churcher C.M."/>
            <person name="Harris D.E."/>
            <person name="Gordon S.V."/>
            <person name="Eiglmeier K."/>
            <person name="Gas S."/>
            <person name="Barry C.E. III"/>
            <person name="Tekaia F."/>
            <person name="Badcock K."/>
            <person name="Basham D."/>
            <person name="Brown D."/>
            <person name="Chillingworth T."/>
            <person name="Connor R."/>
            <person name="Davies R.M."/>
            <person name="Devlin K."/>
            <person name="Feltwell T."/>
            <person name="Gentles S."/>
            <person name="Hamlin N."/>
            <person name="Holroyd S."/>
            <person name="Hornsby T."/>
            <person name="Jagels K."/>
            <person name="Krogh A."/>
            <person name="McLean J."/>
            <person name="Moule S."/>
            <person name="Murphy L.D."/>
            <person name="Oliver S."/>
            <person name="Osborne J."/>
            <person name="Quail M.A."/>
            <person name="Rajandream M.A."/>
            <person name="Rogers J."/>
            <person name="Rutter S."/>
            <person name="Seeger K."/>
            <person name="Skelton S."/>
            <person name="Squares S."/>
            <person name="Squares R."/>
            <person name="Sulston J.E."/>
            <person name="Taylor K."/>
            <person name="Whitehead S."/>
            <person name="Barrell B.G."/>
        </authorList>
    </citation>
    <scope>NUCLEOTIDE SEQUENCE [LARGE SCALE GENOMIC DNA]</scope>
    <source>
        <strain>ATCC 25618 / H37Rv</strain>
    </source>
</reference>
<reference key="2">
    <citation type="journal article" date="2011" name="Mol. Cell. Proteomics">
        <title>Proteogenomic analysis of Mycobacterium tuberculosis by high resolution mass spectrometry.</title>
        <authorList>
            <person name="Kelkar D.S."/>
            <person name="Kumar D."/>
            <person name="Kumar P."/>
            <person name="Balakrishnan L."/>
            <person name="Muthusamy B."/>
            <person name="Yadav A.K."/>
            <person name="Shrivastava P."/>
            <person name="Marimuthu A."/>
            <person name="Anand S."/>
            <person name="Sundaram H."/>
            <person name="Kingsbury R."/>
            <person name="Harsha H.C."/>
            <person name="Nair B."/>
            <person name="Prasad T.S."/>
            <person name="Chauhan D.S."/>
            <person name="Katoch K."/>
            <person name="Katoch V.M."/>
            <person name="Kumar P."/>
            <person name="Chaerkady R."/>
            <person name="Ramachandran S."/>
            <person name="Dash D."/>
            <person name="Pandey A."/>
        </authorList>
    </citation>
    <scope>IDENTIFICATION BY MASS SPECTROMETRY [LARGE SCALE ANALYSIS]</scope>
    <source>
        <strain>ATCC 25618 / H37Rv</strain>
    </source>
</reference>
<reference key="3">
    <citation type="journal article" date="2022" name="Genomics">
        <title>Deep N-terminomics of Mycobacterium tuberculosis H37Rv extensively correct annotated encoding genes.</title>
        <authorList>
            <person name="Shi J."/>
            <person name="Meng S."/>
            <person name="Wan L."/>
            <person name="Zhang Z."/>
            <person name="Jiang S."/>
            <person name="Zhu H."/>
            <person name="Dai E."/>
            <person name="Chang L."/>
            <person name="Gao H."/>
            <person name="Wan K."/>
            <person name="Zhang L."/>
            <person name="Zhao X."/>
            <person name="Liu H."/>
            <person name="Lyu Z."/>
            <person name="Zhang Y."/>
            <person name="Xu P."/>
        </authorList>
    </citation>
    <scope>PROTEIN SEQUENCE OF 2-11</scope>
    <scope>SEQUENCE REVISION TO N-TERMINUS</scope>
    <source>
        <strain>H37Rv</strain>
    </source>
</reference>
<dbReference type="EC" id="4.2.1.20" evidence="1"/>
<dbReference type="EMBL" id="AL123456">
    <property type="protein sequence ID" value="CCP44376.1"/>
    <property type="status" value="ALT_INIT"/>
    <property type="molecule type" value="Genomic_DNA"/>
</dbReference>
<dbReference type="PIR" id="B70557">
    <property type="entry name" value="B70557"/>
</dbReference>
<dbReference type="RefSeq" id="NP_216128.1">
    <property type="nucleotide sequence ID" value="NC_000962.3"/>
</dbReference>
<dbReference type="RefSeq" id="WP_003407997.1">
    <property type="nucleotide sequence ID" value="NC_000962.3"/>
</dbReference>
<dbReference type="RefSeq" id="WP_016721143.1">
    <property type="nucleotide sequence ID" value="NZ_NVQJ01000016.1"/>
</dbReference>
<dbReference type="PDB" id="2O2E">
    <property type="method" value="X-ray"/>
    <property type="resolution" value="2.20 A"/>
    <property type="chains" value="A/B=40-415"/>
</dbReference>
<dbReference type="PDB" id="2O2J">
    <property type="method" value="X-ray"/>
    <property type="resolution" value="2.56 A"/>
    <property type="chains" value="A/B=40-415"/>
</dbReference>
<dbReference type="PDB" id="5OCW">
    <property type="method" value="X-ray"/>
    <property type="resolution" value="4.00 A"/>
    <property type="chains" value="B/D/F/H/J/L/N/P/R/T/V/X=20-418"/>
</dbReference>
<dbReference type="PDB" id="5TCF">
    <property type="method" value="X-ray"/>
    <property type="resolution" value="2.46 A"/>
    <property type="chains" value="B/D/F/H=16-420"/>
</dbReference>
<dbReference type="PDB" id="5TCG">
    <property type="method" value="X-ray"/>
    <property type="resolution" value="2.40 A"/>
    <property type="chains" value="B/D/F/H=20-418"/>
</dbReference>
<dbReference type="PDB" id="5TCH">
    <property type="method" value="X-ray"/>
    <property type="resolution" value="2.35 A"/>
    <property type="chains" value="B/D/F/H=16-420"/>
</dbReference>
<dbReference type="PDB" id="5TCI">
    <property type="method" value="X-ray"/>
    <property type="resolution" value="2.45 A"/>
    <property type="chains" value="B/D/F/H=16-420"/>
</dbReference>
<dbReference type="PDB" id="5TCJ">
    <property type="method" value="X-ray"/>
    <property type="resolution" value="2.40 A"/>
    <property type="chains" value="B/D/F/H=20-418"/>
</dbReference>
<dbReference type="PDB" id="6DWE">
    <property type="method" value="X-ray"/>
    <property type="resolution" value="2.69 A"/>
    <property type="chains" value="B/D/F/H=16-419"/>
</dbReference>
<dbReference type="PDB" id="6E9P">
    <property type="method" value="X-ray"/>
    <property type="resolution" value="2.57 A"/>
    <property type="chains" value="B/D/F/H=16-420"/>
</dbReference>
<dbReference type="PDB" id="6U6C">
    <property type="method" value="X-ray"/>
    <property type="resolution" value="2.40 A"/>
    <property type="chains" value="B/D/F/H=15-419"/>
</dbReference>
<dbReference type="PDB" id="6UAP">
    <property type="method" value="X-ray"/>
    <property type="resolution" value="2.75 A"/>
    <property type="chains" value="B/D/F/H=16-420"/>
</dbReference>
<dbReference type="PDB" id="6UB9">
    <property type="method" value="X-ray"/>
    <property type="resolution" value="2.78 A"/>
    <property type="chains" value="B/D/F/H=16-419"/>
</dbReference>
<dbReference type="PDB" id="6USA">
    <property type="method" value="X-ray"/>
    <property type="resolution" value="2.41 A"/>
    <property type="chains" value="B/D/F/H=16-419"/>
</dbReference>
<dbReference type="PDBsum" id="2O2E"/>
<dbReference type="PDBsum" id="2O2J"/>
<dbReference type="PDBsum" id="5OCW"/>
<dbReference type="PDBsum" id="5TCF"/>
<dbReference type="PDBsum" id="5TCG"/>
<dbReference type="PDBsum" id="5TCH"/>
<dbReference type="PDBsum" id="5TCI"/>
<dbReference type="PDBsum" id="5TCJ"/>
<dbReference type="PDBsum" id="6DWE"/>
<dbReference type="PDBsum" id="6E9P"/>
<dbReference type="PDBsum" id="6U6C"/>
<dbReference type="PDBsum" id="6UAP"/>
<dbReference type="PDBsum" id="6UB9"/>
<dbReference type="PDBsum" id="6USA"/>
<dbReference type="SMR" id="P9WFX9"/>
<dbReference type="FunCoup" id="P9WFX9">
    <property type="interactions" value="359"/>
</dbReference>
<dbReference type="STRING" id="83332.Rv1612"/>
<dbReference type="PaxDb" id="83332-Rv1612"/>
<dbReference type="DNASU" id="885297"/>
<dbReference type="GeneID" id="45425580"/>
<dbReference type="GeneID" id="885297"/>
<dbReference type="KEGG" id="mtu:Rv1612"/>
<dbReference type="PATRIC" id="fig|83332.12.peg.1794"/>
<dbReference type="TubercuList" id="Rv1612"/>
<dbReference type="eggNOG" id="COG0133">
    <property type="taxonomic scope" value="Bacteria"/>
</dbReference>
<dbReference type="InParanoid" id="P9WFX9"/>
<dbReference type="OrthoDB" id="9766131at2"/>
<dbReference type="UniPathway" id="UPA00035">
    <property type="reaction ID" value="UER00044"/>
</dbReference>
<dbReference type="EvolutionaryTrace" id="P9WFX9"/>
<dbReference type="Proteomes" id="UP000001584">
    <property type="component" value="Chromosome"/>
</dbReference>
<dbReference type="GO" id="GO:0005737">
    <property type="term" value="C:cytoplasm"/>
    <property type="evidence" value="ECO:0000318"/>
    <property type="project" value="GO_Central"/>
</dbReference>
<dbReference type="GO" id="GO:0004834">
    <property type="term" value="F:tryptophan synthase activity"/>
    <property type="evidence" value="ECO:0000314"/>
    <property type="project" value="MTBBASE"/>
</dbReference>
<dbReference type="GO" id="GO:0000162">
    <property type="term" value="P:L-tryptophan biosynthetic process"/>
    <property type="evidence" value="ECO:0000314"/>
    <property type="project" value="MTBBASE"/>
</dbReference>
<dbReference type="CDD" id="cd06446">
    <property type="entry name" value="Trp-synth_B"/>
    <property type="match status" value="1"/>
</dbReference>
<dbReference type="FunFam" id="3.40.50.1100:FF:000001">
    <property type="entry name" value="Tryptophan synthase beta chain"/>
    <property type="match status" value="1"/>
</dbReference>
<dbReference type="FunFam" id="3.40.50.1100:FF:000004">
    <property type="entry name" value="Tryptophan synthase beta chain"/>
    <property type="match status" value="1"/>
</dbReference>
<dbReference type="Gene3D" id="3.40.50.1100">
    <property type="match status" value="2"/>
</dbReference>
<dbReference type="HAMAP" id="MF_00133">
    <property type="entry name" value="Trp_synth_beta"/>
    <property type="match status" value="1"/>
</dbReference>
<dbReference type="InterPro" id="IPR006653">
    <property type="entry name" value="Trp_synth_b_CS"/>
</dbReference>
<dbReference type="InterPro" id="IPR006654">
    <property type="entry name" value="Trp_synth_beta"/>
</dbReference>
<dbReference type="InterPro" id="IPR023026">
    <property type="entry name" value="Trp_synth_beta/beta-like"/>
</dbReference>
<dbReference type="InterPro" id="IPR001926">
    <property type="entry name" value="TrpB-like_PALP"/>
</dbReference>
<dbReference type="InterPro" id="IPR036052">
    <property type="entry name" value="TrpB-like_PALP_sf"/>
</dbReference>
<dbReference type="NCBIfam" id="TIGR00263">
    <property type="entry name" value="trpB"/>
    <property type="match status" value="1"/>
</dbReference>
<dbReference type="PANTHER" id="PTHR48077:SF3">
    <property type="entry name" value="TRYPTOPHAN SYNTHASE"/>
    <property type="match status" value="1"/>
</dbReference>
<dbReference type="PANTHER" id="PTHR48077">
    <property type="entry name" value="TRYPTOPHAN SYNTHASE-RELATED"/>
    <property type="match status" value="1"/>
</dbReference>
<dbReference type="Pfam" id="PF00291">
    <property type="entry name" value="PALP"/>
    <property type="match status" value="1"/>
</dbReference>
<dbReference type="PIRSF" id="PIRSF001413">
    <property type="entry name" value="Trp_syn_beta"/>
    <property type="match status" value="1"/>
</dbReference>
<dbReference type="SUPFAM" id="SSF53686">
    <property type="entry name" value="Tryptophan synthase beta subunit-like PLP-dependent enzymes"/>
    <property type="match status" value="1"/>
</dbReference>
<dbReference type="PROSITE" id="PS00168">
    <property type="entry name" value="TRP_SYNTHASE_BETA"/>
    <property type="match status" value="1"/>
</dbReference>
<name>TRPB_MYCTU</name>
<proteinExistence type="evidence at protein level"/>
<accession>P9WFX9</accession>
<accession>L0T779</accession>
<accession>O08376</accession>
<accession>P66984</accession>
<organism>
    <name type="scientific">Mycobacterium tuberculosis (strain ATCC 25618 / H37Rv)</name>
    <dbReference type="NCBI Taxonomy" id="83332"/>
    <lineage>
        <taxon>Bacteria</taxon>
        <taxon>Bacillati</taxon>
        <taxon>Actinomycetota</taxon>
        <taxon>Actinomycetes</taxon>
        <taxon>Mycobacteriales</taxon>
        <taxon>Mycobacteriaceae</taxon>
        <taxon>Mycobacterium</taxon>
        <taxon>Mycobacterium tuberculosis complex</taxon>
    </lineage>
</organism>
<gene>
    <name evidence="1" type="primary">trpB</name>
    <name type="ordered locus">Rv1612</name>
    <name type="ORF">MTCY01B2.04</name>
</gene>